<proteinExistence type="inferred from homology"/>
<protein>
    <recommendedName>
        <fullName evidence="1">DNA replication and repair protein RecF</fullName>
    </recommendedName>
</protein>
<accession>C4K0P8</accession>
<keyword id="KW-0067">ATP-binding</keyword>
<keyword id="KW-0963">Cytoplasm</keyword>
<keyword id="KW-0227">DNA damage</keyword>
<keyword id="KW-0234">DNA repair</keyword>
<keyword id="KW-0235">DNA replication</keyword>
<keyword id="KW-0238">DNA-binding</keyword>
<keyword id="KW-0547">Nucleotide-binding</keyword>
<keyword id="KW-0742">SOS response</keyword>
<organism>
    <name type="scientific">Rickettsia peacockii (strain Rustic)</name>
    <dbReference type="NCBI Taxonomy" id="562019"/>
    <lineage>
        <taxon>Bacteria</taxon>
        <taxon>Pseudomonadati</taxon>
        <taxon>Pseudomonadota</taxon>
        <taxon>Alphaproteobacteria</taxon>
        <taxon>Rickettsiales</taxon>
        <taxon>Rickettsiaceae</taxon>
        <taxon>Rickettsieae</taxon>
        <taxon>Rickettsia</taxon>
        <taxon>spotted fever group</taxon>
    </lineage>
</organism>
<gene>
    <name evidence="1" type="primary">recF</name>
    <name type="ordered locus">RPR_01090</name>
</gene>
<comment type="function">
    <text evidence="1">The RecF protein is involved in DNA metabolism; it is required for DNA replication and normal SOS inducibility. RecF binds preferentially to single-stranded, linear DNA. It also seems to bind ATP.</text>
</comment>
<comment type="subcellular location">
    <subcellularLocation>
        <location evidence="1">Cytoplasm</location>
    </subcellularLocation>
</comment>
<comment type="similarity">
    <text evidence="1">Belongs to the RecF family.</text>
</comment>
<sequence>MKNIFLHSLSLENYRNFKNLELKTDNTPIILIGENGSGKTNILEAISLFYPGRGLRSAKLANVCKTSEDHCLVKALLQSKLGLAEFTTQFKRSSNRRITEYNESKIANNELSKFTSMVWLTPHMEGIFTSGSNDRRKFLDRIVYNFDPKHAELVSKYEYYMHERNKILVEDIRDDNWLKIIEEKMADISNHIANNRLKTLEFMQQAIDDLENEFPKADLSIDGIVEQKILNGKENIVSFITAELYQTRSKDKLLGRTSFGVHKSDFLVKHQKKNILAKFCSTGEQKAILIAIILAEMNYAIKLTKIAPILLLDEVFVHLDDKRRQYLIEFLTGLNMQLWVTTTNLEGIENFATKAQLIKL</sequence>
<dbReference type="EMBL" id="CP001227">
    <property type="protein sequence ID" value="ACR47149.1"/>
    <property type="molecule type" value="Genomic_DNA"/>
</dbReference>
<dbReference type="RefSeq" id="WP_012736443.1">
    <property type="nucleotide sequence ID" value="NC_012730.1"/>
</dbReference>
<dbReference type="SMR" id="C4K0P8"/>
<dbReference type="KEGG" id="rpk:RPR_01090"/>
<dbReference type="HOGENOM" id="CLU_040267_2_0_5"/>
<dbReference type="Proteomes" id="UP000005015">
    <property type="component" value="Chromosome"/>
</dbReference>
<dbReference type="GO" id="GO:0005737">
    <property type="term" value="C:cytoplasm"/>
    <property type="evidence" value="ECO:0007669"/>
    <property type="project" value="UniProtKB-SubCell"/>
</dbReference>
<dbReference type="GO" id="GO:0005524">
    <property type="term" value="F:ATP binding"/>
    <property type="evidence" value="ECO:0007669"/>
    <property type="project" value="UniProtKB-UniRule"/>
</dbReference>
<dbReference type="GO" id="GO:0003697">
    <property type="term" value="F:single-stranded DNA binding"/>
    <property type="evidence" value="ECO:0007669"/>
    <property type="project" value="UniProtKB-UniRule"/>
</dbReference>
<dbReference type="GO" id="GO:0006260">
    <property type="term" value="P:DNA replication"/>
    <property type="evidence" value="ECO:0007669"/>
    <property type="project" value="UniProtKB-UniRule"/>
</dbReference>
<dbReference type="GO" id="GO:0000731">
    <property type="term" value="P:DNA synthesis involved in DNA repair"/>
    <property type="evidence" value="ECO:0007669"/>
    <property type="project" value="TreeGrafter"/>
</dbReference>
<dbReference type="GO" id="GO:0006302">
    <property type="term" value="P:double-strand break repair"/>
    <property type="evidence" value="ECO:0007669"/>
    <property type="project" value="TreeGrafter"/>
</dbReference>
<dbReference type="GO" id="GO:0009432">
    <property type="term" value="P:SOS response"/>
    <property type="evidence" value="ECO:0007669"/>
    <property type="project" value="UniProtKB-UniRule"/>
</dbReference>
<dbReference type="Gene3D" id="3.40.50.300">
    <property type="entry name" value="P-loop containing nucleotide triphosphate hydrolases"/>
    <property type="match status" value="1"/>
</dbReference>
<dbReference type="Gene3D" id="1.20.1050.90">
    <property type="entry name" value="RecF/RecN/SMC, N-terminal domain"/>
    <property type="match status" value="1"/>
</dbReference>
<dbReference type="HAMAP" id="MF_00365">
    <property type="entry name" value="RecF"/>
    <property type="match status" value="1"/>
</dbReference>
<dbReference type="InterPro" id="IPR001238">
    <property type="entry name" value="DNA-binding_RecF"/>
</dbReference>
<dbReference type="InterPro" id="IPR018078">
    <property type="entry name" value="DNA-binding_RecF_CS"/>
</dbReference>
<dbReference type="InterPro" id="IPR027417">
    <property type="entry name" value="P-loop_NTPase"/>
</dbReference>
<dbReference type="InterPro" id="IPR003395">
    <property type="entry name" value="RecF/RecN/SMC_N"/>
</dbReference>
<dbReference type="InterPro" id="IPR042174">
    <property type="entry name" value="RecF_2"/>
</dbReference>
<dbReference type="NCBIfam" id="TIGR00611">
    <property type="entry name" value="recf"/>
    <property type="match status" value="1"/>
</dbReference>
<dbReference type="PANTHER" id="PTHR32182">
    <property type="entry name" value="DNA REPLICATION AND REPAIR PROTEIN RECF"/>
    <property type="match status" value="1"/>
</dbReference>
<dbReference type="PANTHER" id="PTHR32182:SF0">
    <property type="entry name" value="DNA REPLICATION AND REPAIR PROTEIN RECF"/>
    <property type="match status" value="1"/>
</dbReference>
<dbReference type="Pfam" id="PF02463">
    <property type="entry name" value="SMC_N"/>
    <property type="match status" value="1"/>
</dbReference>
<dbReference type="SUPFAM" id="SSF52540">
    <property type="entry name" value="P-loop containing nucleoside triphosphate hydrolases"/>
    <property type="match status" value="1"/>
</dbReference>
<dbReference type="PROSITE" id="PS00617">
    <property type="entry name" value="RECF_1"/>
    <property type="match status" value="1"/>
</dbReference>
<dbReference type="PROSITE" id="PS00618">
    <property type="entry name" value="RECF_2"/>
    <property type="match status" value="1"/>
</dbReference>
<reference key="1">
    <citation type="journal article" date="2009" name="PLoS ONE">
        <title>Genome sequence of the endosymbiont Rickettsia peacockii and comparison with virulent Rickettsia rickettsii: identification of virulence factors.</title>
        <authorList>
            <person name="Felsheim R.F."/>
            <person name="Kurtti T.J."/>
            <person name="Munderloh U.G."/>
        </authorList>
    </citation>
    <scope>NUCLEOTIDE SEQUENCE [LARGE SCALE GENOMIC DNA]</scope>
    <source>
        <strain>Rustic</strain>
    </source>
</reference>
<name>RECF_RICPU</name>
<feature type="chain" id="PRO_1000205504" description="DNA replication and repair protein RecF">
    <location>
        <begin position="1"/>
        <end position="360"/>
    </location>
</feature>
<feature type="binding site" evidence="1">
    <location>
        <begin position="33"/>
        <end position="40"/>
    </location>
    <ligand>
        <name>ATP</name>
        <dbReference type="ChEBI" id="CHEBI:30616"/>
    </ligand>
</feature>
<evidence type="ECO:0000255" key="1">
    <source>
        <dbReference type="HAMAP-Rule" id="MF_00365"/>
    </source>
</evidence>